<evidence type="ECO:0000250" key="1"/>
<evidence type="ECO:0000305" key="2"/>
<sequence length="156" mass="19161">MKFNDVYNKHHKIIHHLLKKYNISYNYDEYYQLLLIKMWQLSQIYKPSSKQSLSSFLFTRLNYYLIDLFRQQNQLKDVILCENNSPTLTEQPTYFNEHDLRLQDIFKLLNHRERLWLKLYLEGYKQFEIAEIMSLSLSTIKLIKMSVKRKCQHNFN</sequence>
<dbReference type="EMBL" id="BA000017">
    <property type="protein sequence ID" value="BAB57939.1"/>
    <property type="molecule type" value="Genomic_DNA"/>
</dbReference>
<dbReference type="RefSeq" id="WP_000671057.1">
    <property type="nucleotide sequence ID" value="NC_002758.2"/>
</dbReference>
<dbReference type="SMR" id="Q99T92"/>
<dbReference type="KEGG" id="sav:SAV1777"/>
<dbReference type="HOGENOM" id="CLU_047691_20_2_9"/>
<dbReference type="Proteomes" id="UP000002481">
    <property type="component" value="Chromosome"/>
</dbReference>
<dbReference type="GO" id="GO:0003677">
    <property type="term" value="F:DNA binding"/>
    <property type="evidence" value="ECO:0007669"/>
    <property type="project" value="UniProtKB-KW"/>
</dbReference>
<dbReference type="GO" id="GO:0016987">
    <property type="term" value="F:sigma factor activity"/>
    <property type="evidence" value="ECO:0007669"/>
    <property type="project" value="UniProtKB-KW"/>
</dbReference>
<dbReference type="GO" id="GO:0006352">
    <property type="term" value="P:DNA-templated transcription initiation"/>
    <property type="evidence" value="ECO:0007669"/>
    <property type="project" value="InterPro"/>
</dbReference>
<dbReference type="Gene3D" id="1.10.10.10">
    <property type="entry name" value="Winged helix-like DNA-binding domain superfamily/Winged helix DNA-binding domain"/>
    <property type="match status" value="1"/>
</dbReference>
<dbReference type="InterPro" id="IPR014284">
    <property type="entry name" value="RNA_pol_sigma-70_dom"/>
</dbReference>
<dbReference type="InterPro" id="IPR007627">
    <property type="entry name" value="RNA_pol_sigma70_r2"/>
</dbReference>
<dbReference type="InterPro" id="IPR013325">
    <property type="entry name" value="RNA_pol_sigma_r2"/>
</dbReference>
<dbReference type="InterPro" id="IPR016032">
    <property type="entry name" value="Sig_transdc_resp-reg_C-effctor"/>
</dbReference>
<dbReference type="InterPro" id="IPR036388">
    <property type="entry name" value="WH-like_DNA-bd_sf"/>
</dbReference>
<dbReference type="NCBIfam" id="TIGR02937">
    <property type="entry name" value="sigma70-ECF"/>
    <property type="match status" value="1"/>
</dbReference>
<dbReference type="Pfam" id="PF04542">
    <property type="entry name" value="Sigma70_r2"/>
    <property type="match status" value="1"/>
</dbReference>
<dbReference type="SUPFAM" id="SSF46894">
    <property type="entry name" value="C-terminal effector domain of the bipartite response regulators"/>
    <property type="match status" value="1"/>
</dbReference>
<dbReference type="SUPFAM" id="SSF88946">
    <property type="entry name" value="Sigma2 domain of RNA polymerase sigma factors"/>
    <property type="match status" value="1"/>
</dbReference>
<comment type="function">
    <text evidence="1">Sigma factors are initiation factors that promote the attachment of RNA polymerase to specific initiation sites and are then released. Sigma-S contributes to the protection against external stress, thus playing a role in cellular fitness and survival (By similarity).</text>
</comment>
<comment type="similarity">
    <text evidence="2">Belongs to the sigma-70 factor family.</text>
</comment>
<keyword id="KW-0238">DNA-binding</keyword>
<keyword id="KW-0731">Sigma factor</keyword>
<keyword id="KW-0804">Transcription</keyword>
<keyword id="KW-0805">Transcription regulation</keyword>
<organism>
    <name type="scientific">Staphylococcus aureus (strain Mu50 / ATCC 700699)</name>
    <dbReference type="NCBI Taxonomy" id="158878"/>
    <lineage>
        <taxon>Bacteria</taxon>
        <taxon>Bacillati</taxon>
        <taxon>Bacillota</taxon>
        <taxon>Bacilli</taxon>
        <taxon>Bacillales</taxon>
        <taxon>Staphylococcaceae</taxon>
        <taxon>Staphylococcus</taxon>
    </lineage>
</organism>
<name>SIGS_STAAM</name>
<accession>Q99T92</accession>
<proteinExistence type="inferred from homology"/>
<gene>
    <name type="primary">sigS</name>
    <name type="ordered locus">SAV1777</name>
</gene>
<feature type="chain" id="PRO_0000367451" description="RNA polymerase sigma factor SigS">
    <location>
        <begin position="1"/>
        <end position="156"/>
    </location>
</feature>
<feature type="DNA-binding region" description="H-T-H motif" evidence="1">
    <location>
        <begin position="126"/>
        <end position="145"/>
    </location>
</feature>
<feature type="short sequence motif" description="Polymerase core binding">
    <location>
        <begin position="29"/>
        <end position="44"/>
    </location>
</feature>
<protein>
    <recommendedName>
        <fullName>RNA polymerase sigma factor SigS</fullName>
    </recommendedName>
</protein>
<reference key="1">
    <citation type="journal article" date="2001" name="Lancet">
        <title>Whole genome sequencing of meticillin-resistant Staphylococcus aureus.</title>
        <authorList>
            <person name="Kuroda M."/>
            <person name="Ohta T."/>
            <person name="Uchiyama I."/>
            <person name="Baba T."/>
            <person name="Yuzawa H."/>
            <person name="Kobayashi I."/>
            <person name="Cui L."/>
            <person name="Oguchi A."/>
            <person name="Aoki K."/>
            <person name="Nagai Y."/>
            <person name="Lian J.-Q."/>
            <person name="Ito T."/>
            <person name="Kanamori M."/>
            <person name="Matsumaru H."/>
            <person name="Maruyama A."/>
            <person name="Murakami H."/>
            <person name="Hosoyama A."/>
            <person name="Mizutani-Ui Y."/>
            <person name="Takahashi N.K."/>
            <person name="Sawano T."/>
            <person name="Inoue R."/>
            <person name="Kaito C."/>
            <person name="Sekimizu K."/>
            <person name="Hirakawa H."/>
            <person name="Kuhara S."/>
            <person name="Goto S."/>
            <person name="Yabuzaki J."/>
            <person name="Kanehisa M."/>
            <person name="Yamashita A."/>
            <person name="Oshima K."/>
            <person name="Furuya K."/>
            <person name="Yoshino C."/>
            <person name="Shiba T."/>
            <person name="Hattori M."/>
            <person name="Ogasawara N."/>
            <person name="Hayashi H."/>
            <person name="Hiramatsu K."/>
        </authorList>
    </citation>
    <scope>NUCLEOTIDE SEQUENCE [LARGE SCALE GENOMIC DNA]</scope>
    <source>
        <strain>Mu50 / ATCC 700699</strain>
    </source>
</reference>